<name>BAMA_KLEP3</name>
<keyword id="KW-0998">Cell outer membrane</keyword>
<keyword id="KW-0472">Membrane</keyword>
<keyword id="KW-0677">Repeat</keyword>
<keyword id="KW-0732">Signal</keyword>
<keyword id="KW-0812">Transmembrane</keyword>
<keyword id="KW-1134">Transmembrane beta strand</keyword>
<sequence length="809" mass="89908">MAMKKLLIASLLFSSATVYGAEGFVVKDIHFEGLQRVAVGAALLSMPVRPGDTVTDDDISNTIRALFATGNFEDVRVLRDGDTLLVQVKERPTIASITFSGNKSVKDDMLKQNLEASGVRVGESLDRTTIADIEKGLEDFYYSVGKYSASVKAVVTPLPRNRVDLKLVFQEGVSAKIQQINIVGNHAFSTDELISHFQLRDEVPWWNVVGDRKYQKQKLAGDLETLRSYYLDRGYARFNIDSTQVSLTPDKKGIYITVNITEGDQYKISGVQVTGDLAGHSAEIEALTKVEPGELYNGAKVTKMENDIKKLLGRYGYAYPRVQSQPEINDSDKTVKLHVNVDAGNRYYVRKIRFEGNDTSKDAVLRREMRQMEGAWLGSDLVDQGKDRLNRLGFFETVDTDTQRVPGSPDQVDVVYKVKERNTGSFNFGIGYGTESGVSFQAGVQQDNWLGTGYAVGINGTKNDYQTYTELSVTNPYFTVDGVSLGGRIFYNDFDANDADLSDYTNKSYGTDVTLGFPVNEYNTLRAGVGYVHNSLSNMQPQVAMWRYLNSMGQYPDNTNDRNSFSANDFTFNYGWTYNKLDRGFFPTEGSRVNLNGKVTIPGSDNEYYKATLDTATYVPIDNDHQWVVLGRTRFGYGDGIGGKEMPFYENFYAGGSSTVRGFQSNTIGPKAVYFPSSSRHDGDSGYTNDCKSTESAPCKSDDAVGGNAMAVASLELITPTPFISDKYANSVRTSVFWDMGTVWDTHWDSNAYGGYPDYSDPSNIRMSAGIAVQWMSPLGPLVFSYAQPFKKYDGDKAEQFQFNIGKTW</sequence>
<organism>
    <name type="scientific">Klebsiella pneumoniae (strain 342)</name>
    <dbReference type="NCBI Taxonomy" id="507522"/>
    <lineage>
        <taxon>Bacteria</taxon>
        <taxon>Pseudomonadati</taxon>
        <taxon>Pseudomonadota</taxon>
        <taxon>Gammaproteobacteria</taxon>
        <taxon>Enterobacterales</taxon>
        <taxon>Enterobacteriaceae</taxon>
        <taxon>Klebsiella/Raoultella group</taxon>
        <taxon>Klebsiella</taxon>
        <taxon>Klebsiella pneumoniae complex</taxon>
    </lineage>
</organism>
<accession>B5Y1J4</accession>
<gene>
    <name evidence="1" type="primary">bamA</name>
    <name type="synonym">yaeT</name>
    <name type="ordered locus">KPK_4543</name>
</gene>
<evidence type="ECO:0000255" key="1">
    <source>
        <dbReference type="HAMAP-Rule" id="MF_01430"/>
    </source>
</evidence>
<evidence type="ECO:0000255" key="2">
    <source>
        <dbReference type="PROSITE-ProRule" id="PRU01115"/>
    </source>
</evidence>
<feature type="signal peptide" evidence="1">
    <location>
        <begin position="1"/>
        <end position="20"/>
    </location>
</feature>
<feature type="chain" id="PRO_1000145780" description="Outer membrane protein assembly factor BamA">
    <location>
        <begin position="21"/>
        <end position="809"/>
    </location>
</feature>
<feature type="domain" description="POTRA 1" evidence="2">
    <location>
        <begin position="24"/>
        <end position="91"/>
    </location>
</feature>
<feature type="domain" description="POTRA 2" evidence="2">
    <location>
        <begin position="92"/>
        <end position="172"/>
    </location>
</feature>
<feature type="domain" description="POTRA 3" evidence="2">
    <location>
        <begin position="175"/>
        <end position="263"/>
    </location>
</feature>
<feature type="domain" description="POTRA 4" evidence="2">
    <location>
        <begin position="266"/>
        <end position="344"/>
    </location>
</feature>
<feature type="domain" description="POTRA 5" evidence="2">
    <location>
        <begin position="347"/>
        <end position="421"/>
    </location>
</feature>
<proteinExistence type="inferred from homology"/>
<dbReference type="EMBL" id="CP000964">
    <property type="protein sequence ID" value="ACI09166.1"/>
    <property type="molecule type" value="Genomic_DNA"/>
</dbReference>
<dbReference type="SMR" id="B5Y1J4"/>
<dbReference type="KEGG" id="kpe:KPK_4543"/>
<dbReference type="HOGENOM" id="CLU_007664_1_0_6"/>
<dbReference type="Proteomes" id="UP000001734">
    <property type="component" value="Chromosome"/>
</dbReference>
<dbReference type="GO" id="GO:1990063">
    <property type="term" value="C:Bam protein complex"/>
    <property type="evidence" value="ECO:0007669"/>
    <property type="project" value="TreeGrafter"/>
</dbReference>
<dbReference type="GO" id="GO:0043165">
    <property type="term" value="P:Gram-negative-bacterium-type cell outer membrane assembly"/>
    <property type="evidence" value="ECO:0007669"/>
    <property type="project" value="UniProtKB-UniRule"/>
</dbReference>
<dbReference type="GO" id="GO:0051205">
    <property type="term" value="P:protein insertion into membrane"/>
    <property type="evidence" value="ECO:0007669"/>
    <property type="project" value="UniProtKB-UniRule"/>
</dbReference>
<dbReference type="FunFam" id="2.40.160.50:FF:000001">
    <property type="entry name" value="Outer membrane protein assembly factor BamA"/>
    <property type="match status" value="1"/>
</dbReference>
<dbReference type="FunFam" id="3.10.20.310:FF:000001">
    <property type="entry name" value="Outer membrane protein assembly factor BamA"/>
    <property type="match status" value="1"/>
</dbReference>
<dbReference type="FunFam" id="3.10.20.310:FF:000002">
    <property type="entry name" value="Outer membrane protein assembly factor BamA"/>
    <property type="match status" value="1"/>
</dbReference>
<dbReference type="FunFam" id="3.10.20.310:FF:000003">
    <property type="entry name" value="Outer membrane protein assembly factor BamA"/>
    <property type="match status" value="1"/>
</dbReference>
<dbReference type="FunFam" id="3.10.20.310:FF:000004">
    <property type="entry name" value="Outer membrane protein assembly factor BamA"/>
    <property type="match status" value="1"/>
</dbReference>
<dbReference type="FunFam" id="3.10.20.310:FF:000005">
    <property type="entry name" value="Outer membrane protein assembly factor BamA"/>
    <property type="match status" value="1"/>
</dbReference>
<dbReference type="Gene3D" id="3.10.20.310">
    <property type="entry name" value="membrane protein fhac"/>
    <property type="match status" value="5"/>
</dbReference>
<dbReference type="Gene3D" id="2.40.160.50">
    <property type="entry name" value="membrane protein fhac: a member of the omp85/tpsb transporter family"/>
    <property type="match status" value="1"/>
</dbReference>
<dbReference type="HAMAP" id="MF_01430">
    <property type="entry name" value="OM_assembly_BamA"/>
    <property type="match status" value="1"/>
</dbReference>
<dbReference type="InterPro" id="IPR000184">
    <property type="entry name" value="Bac_surfAg_D15"/>
</dbReference>
<dbReference type="InterPro" id="IPR010827">
    <property type="entry name" value="BamA/TamA_POTRA"/>
</dbReference>
<dbReference type="InterPro" id="IPR039910">
    <property type="entry name" value="D15-like"/>
</dbReference>
<dbReference type="InterPro" id="IPR023707">
    <property type="entry name" value="OM_assembly_BamA"/>
</dbReference>
<dbReference type="InterPro" id="IPR034746">
    <property type="entry name" value="POTRA"/>
</dbReference>
<dbReference type="NCBIfam" id="TIGR03303">
    <property type="entry name" value="OM_YaeT"/>
    <property type="match status" value="1"/>
</dbReference>
<dbReference type="NCBIfam" id="NF008287">
    <property type="entry name" value="PRK11067.1"/>
    <property type="match status" value="1"/>
</dbReference>
<dbReference type="PANTHER" id="PTHR12815:SF23">
    <property type="entry name" value="OUTER MEMBRANE PROTEIN ASSEMBLY FACTOR BAMA"/>
    <property type="match status" value="1"/>
</dbReference>
<dbReference type="PANTHER" id="PTHR12815">
    <property type="entry name" value="SORTING AND ASSEMBLY MACHINERY SAMM50 PROTEIN FAMILY MEMBER"/>
    <property type="match status" value="1"/>
</dbReference>
<dbReference type="Pfam" id="PF01103">
    <property type="entry name" value="Omp85"/>
    <property type="match status" value="1"/>
</dbReference>
<dbReference type="Pfam" id="PF07244">
    <property type="entry name" value="POTRA"/>
    <property type="match status" value="4"/>
</dbReference>
<dbReference type="PIRSF" id="PIRSF006076">
    <property type="entry name" value="OM_assembly_OMP85"/>
    <property type="match status" value="1"/>
</dbReference>
<dbReference type="PROSITE" id="PS51779">
    <property type="entry name" value="POTRA"/>
    <property type="match status" value="5"/>
</dbReference>
<protein>
    <recommendedName>
        <fullName evidence="1">Outer membrane protein assembly factor BamA</fullName>
    </recommendedName>
</protein>
<reference key="1">
    <citation type="journal article" date="2008" name="PLoS Genet.">
        <title>Complete genome sequence of the N2-fixing broad host range endophyte Klebsiella pneumoniae 342 and virulence predictions verified in mice.</title>
        <authorList>
            <person name="Fouts D.E."/>
            <person name="Tyler H.L."/>
            <person name="DeBoy R.T."/>
            <person name="Daugherty S."/>
            <person name="Ren Q."/>
            <person name="Badger J.H."/>
            <person name="Durkin A.S."/>
            <person name="Huot H."/>
            <person name="Shrivastava S."/>
            <person name="Kothari S."/>
            <person name="Dodson R.J."/>
            <person name="Mohamoud Y."/>
            <person name="Khouri H."/>
            <person name="Roesch L.F.W."/>
            <person name="Krogfelt K.A."/>
            <person name="Struve C."/>
            <person name="Triplett E.W."/>
            <person name="Methe B.A."/>
        </authorList>
    </citation>
    <scope>NUCLEOTIDE SEQUENCE [LARGE SCALE GENOMIC DNA]</scope>
    <source>
        <strain>342</strain>
    </source>
</reference>
<comment type="function">
    <text evidence="1">Part of the outer membrane protein assembly complex, which is involved in assembly and insertion of beta-barrel proteins into the outer membrane. Constitutes, with BamD, the core component of the assembly machinery.</text>
</comment>
<comment type="subunit">
    <text evidence="1">Part of the Bam complex, which is composed of the outer membrane protein BamA, and four lipoproteins BamB, BamC, BamD and BamE.</text>
</comment>
<comment type="subcellular location">
    <subcellularLocation>
        <location evidence="1">Cell outer membrane</location>
    </subcellularLocation>
</comment>
<comment type="similarity">
    <text evidence="1">Belongs to the BamA family.</text>
</comment>